<name>MTR_SHIFL</name>
<feature type="chain" id="PRO_0000093799" description="Tryptophan-specific transport protein">
    <location>
        <begin position="1"/>
        <end position="414"/>
    </location>
</feature>
<feature type="topological domain" description="Cytoplasmic" evidence="1">
    <location>
        <begin position="1"/>
        <end position="15"/>
    </location>
</feature>
<feature type="transmembrane region" description="Helical" evidence="2">
    <location>
        <begin position="16"/>
        <end position="36"/>
    </location>
</feature>
<feature type="topological domain" description="Periplasmic" evidence="1">
    <location>
        <begin position="37"/>
        <end position="41"/>
    </location>
</feature>
<feature type="transmembrane region" description="Helical" evidence="2">
    <location>
        <begin position="42"/>
        <end position="62"/>
    </location>
</feature>
<feature type="topological domain" description="Cytoplasmic" evidence="1">
    <location>
        <begin position="63"/>
        <end position="88"/>
    </location>
</feature>
<feature type="transmembrane region" description="Helical" evidence="2">
    <location>
        <begin position="89"/>
        <end position="109"/>
    </location>
</feature>
<feature type="topological domain" description="Periplasmic" evidence="1">
    <location>
        <begin position="110"/>
        <end position="128"/>
    </location>
</feature>
<feature type="transmembrane region" description="Helical" evidence="2">
    <location>
        <begin position="129"/>
        <end position="149"/>
    </location>
</feature>
<feature type="topological domain" description="Cytoplasmic" evidence="1">
    <location>
        <begin position="150"/>
        <end position="151"/>
    </location>
</feature>
<feature type="transmembrane region" description="Helical" evidence="2">
    <location>
        <begin position="152"/>
        <end position="172"/>
    </location>
</feature>
<feature type="topological domain" description="Periplasmic" evidence="1">
    <location>
        <begin position="173"/>
        <end position="193"/>
    </location>
</feature>
<feature type="transmembrane region" description="Helical" evidence="2">
    <location>
        <begin position="194"/>
        <end position="214"/>
    </location>
</feature>
<feature type="topological domain" description="Cytoplasmic" evidence="1">
    <location>
        <begin position="215"/>
        <end position="228"/>
    </location>
</feature>
<feature type="transmembrane region" description="Helical" evidence="2">
    <location>
        <begin position="229"/>
        <end position="249"/>
    </location>
</feature>
<feature type="topological domain" description="Periplasmic" evidence="1">
    <location>
        <begin position="250"/>
        <end position="285"/>
    </location>
</feature>
<feature type="transmembrane region" description="Helical" evidence="2">
    <location>
        <begin position="286"/>
        <end position="306"/>
    </location>
</feature>
<feature type="topological domain" description="Cytoplasmic" evidence="1">
    <location>
        <begin position="307"/>
        <end position="325"/>
    </location>
</feature>
<feature type="transmembrane region" description="Helical" evidence="2">
    <location>
        <begin position="326"/>
        <end position="346"/>
    </location>
</feature>
<feature type="transmembrane region" description="Helical" evidence="2">
    <location>
        <begin position="347"/>
        <end position="367"/>
    </location>
</feature>
<feature type="topological domain" description="Cytoplasmic" evidence="1">
    <location>
        <begin position="368"/>
        <end position="386"/>
    </location>
</feature>
<feature type="transmembrane region" description="Helical" evidence="2">
    <location>
        <begin position="387"/>
        <end position="407"/>
    </location>
</feature>
<feature type="topological domain" description="Periplasmic" evidence="1">
    <location>
        <begin position="408"/>
        <end position="414"/>
    </location>
</feature>
<dbReference type="EMBL" id="AE005674">
    <property type="protein sequence ID" value="AAN44669.1"/>
    <property type="molecule type" value="Genomic_DNA"/>
</dbReference>
<dbReference type="EMBL" id="AE014073">
    <property type="protein sequence ID" value="AAP18483.1"/>
    <property type="molecule type" value="Genomic_DNA"/>
</dbReference>
<dbReference type="RefSeq" id="NP_708962.1">
    <property type="nucleotide sequence ID" value="NC_004337.2"/>
</dbReference>
<dbReference type="RefSeq" id="WP_000224351.1">
    <property type="nucleotide sequence ID" value="NZ_WPGW01000004.1"/>
</dbReference>
<dbReference type="SMR" id="P0AAD3"/>
<dbReference type="STRING" id="198214.SF3202"/>
<dbReference type="PaxDb" id="198214-SF3202"/>
<dbReference type="GeneID" id="1027142"/>
<dbReference type="KEGG" id="sfl:SF3202"/>
<dbReference type="KEGG" id="sfx:S3419"/>
<dbReference type="PATRIC" id="fig|198214.7.peg.3801"/>
<dbReference type="HOGENOM" id="CLU_038102_2_1_6"/>
<dbReference type="Proteomes" id="UP000001006">
    <property type="component" value="Chromosome"/>
</dbReference>
<dbReference type="Proteomes" id="UP000002673">
    <property type="component" value="Chromosome"/>
</dbReference>
<dbReference type="GO" id="GO:0005886">
    <property type="term" value="C:plasma membrane"/>
    <property type="evidence" value="ECO:0007669"/>
    <property type="project" value="UniProtKB-SubCell"/>
</dbReference>
<dbReference type="GO" id="GO:0015173">
    <property type="term" value="F:aromatic amino acid transmembrane transporter activity"/>
    <property type="evidence" value="ECO:0007669"/>
    <property type="project" value="InterPro"/>
</dbReference>
<dbReference type="GO" id="GO:0015293">
    <property type="term" value="F:symporter activity"/>
    <property type="evidence" value="ECO:0007669"/>
    <property type="project" value="UniProtKB-KW"/>
</dbReference>
<dbReference type="GO" id="GO:0003333">
    <property type="term" value="P:amino acid transmembrane transport"/>
    <property type="evidence" value="ECO:0007669"/>
    <property type="project" value="InterPro"/>
</dbReference>
<dbReference type="FunFam" id="1.20.1740.10:FF:000019">
    <property type="entry name" value="Tryptophan permease TnaB"/>
    <property type="match status" value="1"/>
</dbReference>
<dbReference type="Gene3D" id="1.20.1740.10">
    <property type="entry name" value="Amino acid/polyamine transporter I"/>
    <property type="match status" value="1"/>
</dbReference>
<dbReference type="InterPro" id="IPR018227">
    <property type="entry name" value="Amino_acid_transport_2"/>
</dbReference>
<dbReference type="InterPro" id="IPR013061">
    <property type="entry name" value="Trp/try_permease_CS"/>
</dbReference>
<dbReference type="InterPro" id="IPR013059">
    <property type="entry name" value="Trp_tyr_transpt"/>
</dbReference>
<dbReference type="NCBIfam" id="TIGR00837">
    <property type="entry name" value="araaP"/>
    <property type="match status" value="1"/>
</dbReference>
<dbReference type="NCBIfam" id="NF007789">
    <property type="entry name" value="PRK10483.1"/>
    <property type="match status" value="1"/>
</dbReference>
<dbReference type="PANTHER" id="PTHR46997">
    <property type="entry name" value="LOW AFFINITY TRYPTOPHAN PERMEASE-RELATED"/>
    <property type="match status" value="1"/>
</dbReference>
<dbReference type="PANTHER" id="PTHR46997:SF1">
    <property type="entry name" value="LOW AFFINITY TRYPTOPHAN PERMEASE-RELATED"/>
    <property type="match status" value="1"/>
</dbReference>
<dbReference type="Pfam" id="PF03222">
    <property type="entry name" value="Trp_Tyr_perm"/>
    <property type="match status" value="1"/>
</dbReference>
<dbReference type="PRINTS" id="PR00166">
    <property type="entry name" value="AROAAPRMEASE"/>
</dbReference>
<dbReference type="PROSITE" id="PS00594">
    <property type="entry name" value="AROMATIC_AA_PERMEASE_1"/>
    <property type="match status" value="1"/>
</dbReference>
<sequence length="414" mass="44333">MATLTTTQTSPSLLGGVVIIGGTIIGAGMFSLPVVMSGAWFFWSMAALIFTWFCMLHSGLMILEANLNYRIGSSFDTITKDLLGKGWNVVNGISIAFVLYILTYAYISASGSILHHTFAEMSLNVPARAAGFGFALLVAFVVWLSTKAVSRMTAIVLGAKVITFFLTFGSLLGHVQPATLFNVAESNASYAPYLLMTLPFCLASFGYHGNVPSLMKYYGKDPKTIVKCLVYGTLMALALYTIWLLATMGNIPRPEFIGIAEKGGNIDVLVQALSGVLNSRSLDLLLVVFSNFAVASSFLGVTLGLFDYLADLFGFDDSAVGRLKTALLTFAPPVVGGLLFPNGFLYAIGYAGLAATIWAAIVPALLARASRKRFGSPKFRVWGGKPMIALILVFGVGNALVHILSSFNLLPVYQ</sequence>
<reference key="1">
    <citation type="journal article" date="2002" name="Nucleic Acids Res.">
        <title>Genome sequence of Shigella flexneri 2a: insights into pathogenicity through comparison with genomes of Escherichia coli K12 and O157.</title>
        <authorList>
            <person name="Jin Q."/>
            <person name="Yuan Z."/>
            <person name="Xu J."/>
            <person name="Wang Y."/>
            <person name="Shen Y."/>
            <person name="Lu W."/>
            <person name="Wang J."/>
            <person name="Liu H."/>
            <person name="Yang J."/>
            <person name="Yang F."/>
            <person name="Zhang X."/>
            <person name="Zhang J."/>
            <person name="Yang G."/>
            <person name="Wu H."/>
            <person name="Qu D."/>
            <person name="Dong J."/>
            <person name="Sun L."/>
            <person name="Xue Y."/>
            <person name="Zhao A."/>
            <person name="Gao Y."/>
            <person name="Zhu J."/>
            <person name="Kan B."/>
            <person name="Ding K."/>
            <person name="Chen S."/>
            <person name="Cheng H."/>
            <person name="Yao Z."/>
            <person name="He B."/>
            <person name="Chen R."/>
            <person name="Ma D."/>
            <person name="Qiang B."/>
            <person name="Wen Y."/>
            <person name="Hou Y."/>
            <person name="Yu J."/>
        </authorList>
    </citation>
    <scope>NUCLEOTIDE SEQUENCE [LARGE SCALE GENOMIC DNA]</scope>
    <source>
        <strain>301 / Serotype 2a</strain>
    </source>
</reference>
<reference key="2">
    <citation type="journal article" date="2003" name="Infect. Immun.">
        <title>Complete genome sequence and comparative genomics of Shigella flexneri serotype 2a strain 2457T.</title>
        <authorList>
            <person name="Wei J."/>
            <person name="Goldberg M.B."/>
            <person name="Burland V."/>
            <person name="Venkatesan M.M."/>
            <person name="Deng W."/>
            <person name="Fournier G."/>
            <person name="Mayhew G.F."/>
            <person name="Plunkett G. III"/>
            <person name="Rose D.J."/>
            <person name="Darling A."/>
            <person name="Mau B."/>
            <person name="Perna N.T."/>
            <person name="Payne S.M."/>
            <person name="Runyen-Janecky L.J."/>
            <person name="Zhou S."/>
            <person name="Schwartz D.C."/>
            <person name="Blattner F.R."/>
        </authorList>
    </citation>
    <scope>NUCLEOTIDE SEQUENCE [LARGE SCALE GENOMIC DNA]</scope>
    <source>
        <strain>ATCC 700930 / 2457T / Serotype 2a</strain>
    </source>
</reference>
<organism>
    <name type="scientific">Shigella flexneri</name>
    <dbReference type="NCBI Taxonomy" id="623"/>
    <lineage>
        <taxon>Bacteria</taxon>
        <taxon>Pseudomonadati</taxon>
        <taxon>Pseudomonadota</taxon>
        <taxon>Gammaproteobacteria</taxon>
        <taxon>Enterobacterales</taxon>
        <taxon>Enterobacteriaceae</taxon>
        <taxon>Shigella</taxon>
    </lineage>
</organism>
<comment type="function">
    <text evidence="1">Involved in the transport of tryptophan into the cell.</text>
</comment>
<comment type="catalytic activity">
    <reaction evidence="1">
        <text>L-tryptophan(in) + H(+)(in) = L-tryptophan(out) + H(+)(out)</text>
        <dbReference type="Rhea" id="RHEA:28879"/>
        <dbReference type="ChEBI" id="CHEBI:15378"/>
        <dbReference type="ChEBI" id="CHEBI:57912"/>
    </reaction>
    <physiologicalReaction direction="right-to-left" evidence="1">
        <dbReference type="Rhea" id="RHEA:28881"/>
    </physiologicalReaction>
</comment>
<comment type="subcellular location">
    <subcellularLocation>
        <location evidence="1">Cell inner membrane</location>
        <topology evidence="1">Multi-pass membrane protein</topology>
    </subcellularLocation>
</comment>
<comment type="similarity">
    <text evidence="3">Belongs to the amino acid/polyamine transporter 2 family. Mtr/TnaB/TyrP permease subfamily.</text>
</comment>
<keyword id="KW-0029">Amino-acid transport</keyword>
<keyword id="KW-0997">Cell inner membrane</keyword>
<keyword id="KW-1003">Cell membrane</keyword>
<keyword id="KW-0472">Membrane</keyword>
<keyword id="KW-1185">Reference proteome</keyword>
<keyword id="KW-0769">Symport</keyword>
<keyword id="KW-0812">Transmembrane</keyword>
<keyword id="KW-1133">Transmembrane helix</keyword>
<keyword id="KW-0813">Transport</keyword>
<proteinExistence type="inferred from homology"/>
<protein>
    <recommendedName>
        <fullName>Tryptophan-specific transport protein</fullName>
    </recommendedName>
    <alternativeName>
        <fullName>Tryptophan permease</fullName>
    </alternativeName>
</protein>
<evidence type="ECO:0000250" key="1">
    <source>
        <dbReference type="UniProtKB" id="P0AAD2"/>
    </source>
</evidence>
<evidence type="ECO:0000255" key="2"/>
<evidence type="ECO:0000305" key="3"/>
<gene>
    <name type="primary">mtr</name>
    <name type="ordered locus">SF3202</name>
    <name type="ordered locus">S3419</name>
</gene>
<accession>P0AAD3</accession>
<accession>P22306</accession>